<protein>
    <recommendedName>
        <fullName>Uncharacterized protein C9orf43 homolog</fullName>
    </recommendedName>
</protein>
<evidence type="ECO:0000256" key="1">
    <source>
        <dbReference type="SAM" id="MobiDB-lite"/>
    </source>
</evidence>
<dbReference type="EMBL" id="AB070149">
    <property type="protein sequence ID" value="BAB63094.1"/>
    <property type="molecule type" value="mRNA"/>
</dbReference>
<dbReference type="STRING" id="9541.ENSMFAP00000019054"/>
<dbReference type="eggNOG" id="ENOG502SUB4">
    <property type="taxonomic scope" value="Eukaryota"/>
</dbReference>
<dbReference type="Proteomes" id="UP000233100">
    <property type="component" value="Unplaced"/>
</dbReference>
<dbReference type="InterPro" id="IPR029134">
    <property type="entry name" value="DUF4647"/>
</dbReference>
<dbReference type="PANTHER" id="PTHR36130">
    <property type="entry name" value="RIKEN CDNA 4933430I17 GENE"/>
    <property type="match status" value="1"/>
</dbReference>
<dbReference type="PANTHER" id="PTHR36130:SF1">
    <property type="entry name" value="RIKEN CDNA 4933430I17 GENE"/>
    <property type="match status" value="1"/>
</dbReference>
<dbReference type="Pfam" id="PF15504">
    <property type="entry name" value="DUF4647"/>
    <property type="match status" value="1"/>
</dbReference>
<organism>
    <name type="scientific">Macaca fascicularis</name>
    <name type="common">Crab-eating macaque</name>
    <name type="synonym">Cynomolgus monkey</name>
    <dbReference type="NCBI Taxonomy" id="9541"/>
    <lineage>
        <taxon>Eukaryota</taxon>
        <taxon>Metazoa</taxon>
        <taxon>Chordata</taxon>
        <taxon>Craniata</taxon>
        <taxon>Vertebrata</taxon>
        <taxon>Euteleostomi</taxon>
        <taxon>Mammalia</taxon>
        <taxon>Eutheria</taxon>
        <taxon>Euarchontoglires</taxon>
        <taxon>Primates</taxon>
        <taxon>Haplorrhini</taxon>
        <taxon>Catarrhini</taxon>
        <taxon>Cercopithecidae</taxon>
        <taxon>Cercopithecinae</taxon>
        <taxon>Macaca</taxon>
    </lineage>
</organism>
<reference key="1">
    <citation type="journal article" date="2002" name="BMC Genomics">
        <title>Cynomolgus monkey testicular cDNAs for discovery of novel human genes in the human genome sequence.</title>
        <authorList>
            <person name="Osada N."/>
            <person name="Hida M."/>
            <person name="Kusuda J."/>
            <person name="Tanuma R."/>
            <person name="Hirata M."/>
            <person name="Suto Y."/>
            <person name="Hirai M."/>
            <person name="Terao K."/>
            <person name="Sugano S."/>
            <person name="Hashimoto K."/>
        </authorList>
    </citation>
    <scope>NUCLEOTIDE SEQUENCE [LARGE SCALE MRNA]</scope>
    <source>
        <tissue>Testis</tissue>
    </source>
</reference>
<gene>
    <name type="ORF">QtsA-15013</name>
</gene>
<proteinExistence type="evidence at transcript level"/>
<keyword id="KW-1185">Reference proteome</keyword>
<sequence length="464" mass="53182">MDLPDESQWDETTCGFAVCQHPQCWATVRRIERGRPRILGSTCKTPLDAEDKLPVLTVVNISDSCFAPRHLPECTVTKARSLLSRSSKFYSKFHGRPPKGLPDKSLINCTNRLPKLPVLNLNETQLPCPEDVRNMVVLWIPEETEIHGRQHGKKKRKNLTVKSKSFLGLSGNQSAVTRVETPGMTVPPPTPVQLSKQFSSDFLPLWAQSEALPQDLLKELLPDRKQTMPCLEMKIKLAMMKKNLPLERNRPDSAISSKMFLSIHRLTLERPALRYPERLKKLHNLKTEGYRKQQQWQQQQQQRKVKTPIKKQEAKKKAKSDPGSQSTSHKHPVTTVHDPLYGYRTLPGQNGDMKQQQQMEKGTTSKQDSTERPKMDYCDHVDFHHNVKGPELYETEPTNKDISAPVEAVLKAQAARQKKISFNFSEIMVRTGWNSELKLLRILQETDDEDEENQYSEAEKPLEE</sequence>
<name>CI043_MACFA</name>
<accession>Q95JN2</accession>
<feature type="chain" id="PRO_0000089693" description="Uncharacterized protein C9orf43 homolog">
    <location>
        <begin position="1"/>
        <end position="464"/>
    </location>
</feature>
<feature type="region of interest" description="Disordered" evidence="1">
    <location>
        <begin position="290"/>
        <end position="374"/>
    </location>
</feature>
<feature type="region of interest" description="Disordered" evidence="1">
    <location>
        <begin position="445"/>
        <end position="464"/>
    </location>
</feature>
<feature type="compositionally biased region" description="Low complexity" evidence="1">
    <location>
        <begin position="293"/>
        <end position="302"/>
    </location>
</feature>
<feature type="compositionally biased region" description="Basic residues" evidence="1">
    <location>
        <begin position="303"/>
        <end position="318"/>
    </location>
</feature>
<feature type="compositionally biased region" description="Polar residues" evidence="1">
    <location>
        <begin position="352"/>
        <end position="367"/>
    </location>
</feature>
<feature type="compositionally biased region" description="Acidic residues" evidence="1">
    <location>
        <begin position="445"/>
        <end position="454"/>
    </location>
</feature>